<keyword id="KW-0025">Alternative splicing</keyword>
<keyword id="KW-0034">Amyloid</keyword>
<keyword id="KW-0053">Apoptosis</keyword>
<keyword id="KW-0130">Cell adhesion</keyword>
<keyword id="KW-1003">Cell membrane</keyword>
<keyword id="KW-0966">Cell projection</keyword>
<keyword id="KW-0168">Coated pit</keyword>
<keyword id="KW-0186">Copper</keyword>
<keyword id="KW-0963">Cytoplasm</keyword>
<keyword id="KW-0968">Cytoplasmic vesicle</keyword>
<keyword id="KW-1015">Disulfide bond</keyword>
<keyword id="KW-0254">Endocytosis</keyword>
<keyword id="KW-0256">Endoplasmic reticulum</keyword>
<keyword id="KW-0967">Endosome</keyword>
<keyword id="KW-0325">Glycoprotein</keyword>
<keyword id="KW-0333">Golgi apparatus</keyword>
<keyword id="KW-0358">Heparin-binding</keyword>
<keyword id="KW-0408">Iron</keyword>
<keyword id="KW-1017">Isopeptide bond</keyword>
<keyword id="KW-0472">Membrane</keyword>
<keyword id="KW-0479">Metal-binding</keyword>
<keyword id="KW-0914">Notch signaling pathway</keyword>
<keyword id="KW-0539">Nucleus</keyword>
<keyword id="KW-0597">Phosphoprotein</keyword>
<keyword id="KW-0646">Protease inhibitor</keyword>
<keyword id="KW-0654">Proteoglycan</keyword>
<keyword id="KW-0964">Secreted</keyword>
<keyword id="KW-0722">Serine protease inhibitor</keyword>
<keyword id="KW-0732">Signal</keyword>
<keyword id="KW-0765">Sulfation</keyword>
<keyword id="KW-0812">Transmembrane</keyword>
<keyword id="KW-1133">Transmembrane helix</keyword>
<keyword id="KW-0832">Ubl conjugation</keyword>
<keyword id="KW-0862">Zinc</keyword>
<protein>
    <recommendedName>
        <fullName evidence="2">Amyloid-beta precursor protein</fullName>
    </recommendedName>
    <alternativeName>
        <fullName>ABPP</fullName>
        <shortName>APP</shortName>
    </alternativeName>
    <alternativeName>
        <fullName>Alzheimer disease amyloid A4 protein homolog</fullName>
    </alternativeName>
    <alternativeName>
        <fullName>Alzheimer disease amyloid protein</fullName>
    </alternativeName>
    <alternativeName>
        <fullName evidence="10">Amyloid precursor protein</fullName>
    </alternativeName>
    <alternativeName>
        <fullName evidence="3">Amyloid-beta (A4) precursor protein</fullName>
    </alternativeName>
    <alternativeName>
        <fullName evidence="3">Amyloid-beta A4 protein</fullName>
    </alternativeName>
    <component>
        <recommendedName>
            <fullName>N-APP</fullName>
        </recommendedName>
    </component>
    <component>
        <recommendedName>
            <fullName>Soluble APP-alpha</fullName>
            <shortName>S-APP-alpha</shortName>
        </recommendedName>
    </component>
    <component>
        <recommendedName>
            <fullName>Soluble APP-beta</fullName>
            <shortName>S-APP-beta</shortName>
        </recommendedName>
    </component>
    <component>
        <recommendedName>
            <fullName>C99</fullName>
        </recommendedName>
        <alternativeName>
            <fullName>Beta-secretase C-terminal fragment</fullName>
            <shortName>Beta-CTF</shortName>
        </alternativeName>
    </component>
    <component>
        <recommendedName>
            <fullName>Amyloid-beta protein 42</fullName>
            <shortName>Abeta42</shortName>
        </recommendedName>
        <alternativeName>
            <fullName>Beta-APP42</fullName>
        </alternativeName>
    </component>
    <component>
        <recommendedName>
            <fullName>Amyloid-beta protein 40</fullName>
            <shortName>Abeta40</shortName>
        </recommendedName>
        <alternativeName>
            <fullName>Beta-APP40</fullName>
        </alternativeName>
    </component>
    <component>
        <recommendedName>
            <fullName>C83</fullName>
        </recommendedName>
        <alternativeName>
            <fullName>Alpha-secretase C-terminal fragment</fullName>
            <shortName>Alpha-CTF</shortName>
        </alternativeName>
    </component>
    <component>
        <recommendedName>
            <fullName>P3(42)</fullName>
        </recommendedName>
    </component>
    <component>
        <recommendedName>
            <fullName>P3(40)</fullName>
        </recommendedName>
    </component>
    <component>
        <recommendedName>
            <fullName>C80</fullName>
        </recommendedName>
    </component>
    <component>
        <recommendedName>
            <fullName>Gamma-secretase C-terminal fragment 59</fullName>
        </recommendedName>
        <alternativeName>
            <fullName>Gamma-CTF(59)</fullName>
        </alternativeName>
    </component>
    <component>
        <recommendedName>
            <fullName>Gamma-secretase C-terminal fragment 57</fullName>
        </recommendedName>
        <alternativeName>
            <fullName>Gamma-CTF(57)</fullName>
        </alternativeName>
    </component>
    <component>
        <recommendedName>
            <fullName>Gamma-secretase C-terminal fragment 50</fullName>
        </recommendedName>
        <alternativeName>
            <fullName>Gamma-CTF(50)</fullName>
        </alternativeName>
    </component>
    <component>
        <recommendedName>
            <fullName>C31</fullName>
        </recommendedName>
    </component>
</protein>
<gene>
    <name evidence="2" type="primary">APP</name>
    <name evidence="2" type="synonym">A4</name>
    <name evidence="2" type="synonym">AD1</name>
</gene>
<proteinExistence type="evidence at transcript level"/>
<name>A4_SAISC</name>
<organism>
    <name type="scientific">Saimiri sciureus</name>
    <name type="common">Common squirrel monkey</name>
    <dbReference type="NCBI Taxonomy" id="9521"/>
    <lineage>
        <taxon>Eukaryota</taxon>
        <taxon>Metazoa</taxon>
        <taxon>Chordata</taxon>
        <taxon>Craniata</taxon>
        <taxon>Vertebrata</taxon>
        <taxon>Euteleostomi</taxon>
        <taxon>Mammalia</taxon>
        <taxon>Eutheria</taxon>
        <taxon>Euarchontoglires</taxon>
        <taxon>Primates</taxon>
        <taxon>Haplorrhini</taxon>
        <taxon>Platyrrhini</taxon>
        <taxon>Cebidae</taxon>
        <taxon>Saimiriinae</taxon>
        <taxon>Saimiri</taxon>
    </lineage>
</organism>
<comment type="function">
    <text evidence="1 2">Functions as a cell surface receptor and performs physiological functions on the surface of neurons relevant to neurite growth, neuronal adhesion and axonogenesis. Interaction between APP molecules on neighboring cells promotes synaptogenesis. Involved in cell mobility and transcription regulation through protein-protein interactions (By similarity). Can promote transcription activation through binding to APBB1-KAT5 and inhibit Notch signaling through interaction with Numb (By similarity). Couples to apoptosis-inducing pathways such as those mediated by G(o) and JIP (By similarity). Inhibits G(o)-alpha ATPase activity (By similarity). Acts as a kinesin I membrane receptor, mediating the axonal transport of beta-secretase and presenilin 1 (By similarity). By acting as a kinesin I membrane receptor, plays a role in axonal anterograde transport of cargo towards synapses in axons (By similarity). May be involved in copper homeostasis/oxidative stress through copper ion reduction (By similarity). In vitro, copper-metallated APP induces neuronal death directly or is potentiated through Cu(2+)-mediated low-density lipoprotein oxidation (By similarity). Can regulate neurite outgrowth through binding to components of the extracellular matrix such as heparin and collagen I and IV. Induces a AGER-dependent pathway that involves activation of p38 MAPK, resulting in internalization of amyloid-beta peptide and mitochondrial dysfunction in cultured cortical neurons. Provides Cu(2+) ions for GPC1 which are required for release of nitric oxide (NO) and subsequent degradation of the heparan sulfate chains on GPC1 (By similarity).</text>
</comment>
<comment type="function">
    <text evidence="1">Amyloid-beta peptides are lipophilic metal chelators with metal-reducing activity. Binds transient metals such as copper, zinc and iron (By similarity).</text>
</comment>
<comment type="function">
    <text evidence="1">The gamma-CTF peptides as well as the caspase-cleaved peptides, including C31, are potent enhancers of neuronal apoptosis.</text>
</comment>
<comment type="subunit">
    <text evidence="2 3 4">Binds, via its C-terminus, to the PID domain of several cytoplasmic proteins, including APBB family members, the APBA family, MAPK8IP1, SHC1 and NUMB and DAB1 (By similarity). Binding to DAB1 inhibits its serine phosphorylation (By similarity). Interacts (via NPXY motif) with DAB2 (via PID domain); the interaction is impaired by tyrosine phosphorylation of the NPXY motif. Also interacts with GPCR-like protein BPP, APPBP1, IB1, KNS2 (via its TPR domains), APPBP2 (via BaSS) and DDB1. In vitro, it binds MAPT via the MT-binding domains (By similarity). Associates with microtubules in the presence of ATP and in a kinesin-dependent manner (By similarity). Interacts, through a C-terminal domain, with GNAO1. Amyloid-beta protein 42 binds CHRNA7 in hippocampal neurons (By similarity). Amyloid-beta associates with HADH2 (By similarity). Interacts with CPEB1, ANKS1B and AGER (By similarity). Interacts with ITM2B. Interacts with ITM2C. Interacts with IDE. Can form homodimers; dimerization is enhanced in the presence of Cu(2+) ions. Can form homodimers; this is promoted by heparin binding (By similarity). Amyloid-beta protein 40 interacts with S100A9 (By similarity). CTF-alpha product of APP interacts with GSAP (By similarity). Isoform APP695 interacts with SORL1 (via N-terminal ectodomain); this interaction retains APP in the trans-Golgi network and reduces processing into soluble APP-alpha and amyloid-beta peptides (By similarity). Isoform APP770 interacts with SORL1 (By similarity). The C99 fragment also interacts with SORL1 (By similarity). Interacts with PLD3 (By similarity). Interacts with VDAC1 (By similarity). Interacts with NSG1; could regulate APP processing (By similarity). Amyloid-beta protein 42 interacts with FPR2 (By similarity). Interacts (via transmembrane region) with PSEN1; the interaction is direct (By similarity). Interacts with LRRK2 (By similarity). Interacts (via cytoplasmic domain) with KIF5B (By similarity). Interacts (via C-terminus) with APBB2/FE65L1 (via C-terminus) (By similarity). Interacts (via intracellular domain) with APBB3 (By similarity).</text>
</comment>
<comment type="subcellular location">
    <subcellularLocation>
        <location evidence="2">Cell membrane</location>
        <topology evidence="2">Single-pass type I membrane protein</topology>
    </subcellularLocation>
    <subcellularLocation>
        <location evidence="2">Membrane</location>
        <topology evidence="2">Single-pass type I membrane protein</topology>
    </subcellularLocation>
    <subcellularLocation>
        <location evidence="2">Perikaryon</location>
    </subcellularLocation>
    <subcellularLocation>
        <location evidence="2">Cell projection</location>
        <location evidence="2">Growth cone</location>
    </subcellularLocation>
    <subcellularLocation>
        <location evidence="2">Membrane</location>
        <location evidence="2">Clathrin-coated pit</location>
    </subcellularLocation>
    <subcellularLocation>
        <location evidence="2">Early endosome</location>
    </subcellularLocation>
    <subcellularLocation>
        <location evidence="2">Cytoplasmic vesicle</location>
    </subcellularLocation>
    <text evidence="2">Cell surface protein that rapidly becomes internalized via clathrin-coated pits. Only a minor proportion is present at the cell membrane; most of the protein is present in intracellular vesicles. During maturation, the immature APP (N-glycosylated in the endoplasmic reticulum) moves to the Golgi complex where complete maturation occurs (O-glycosylated and sulfated). After alpha-secretase cleavage, soluble APP is released into the extracellular space and the C-terminal is internalized to endosomes and lysosomes. Some APP accumulates in secretory transport vesicles leaving the late Golgi compartment and returns to the cell surface. APP sorts to the basolateral surface in epithelial cells. During neuronal differentiation, the Thr-743 phosphorylated form is located mainly in growth cones, moderately in neurites and sparingly in the cell body. Casein kinase phosphorylation can occur either at the cell surface or within a post-Golgi compartment. Associates with GPC1 in perinuclear compartments. Colocalizes with SORL1 in a vesicular pattern in cytoplasm and perinuclear regions.</text>
</comment>
<comment type="subcellular location">
    <molecule>C83</molecule>
    <subcellularLocation>
        <location evidence="2">Endoplasmic reticulum</location>
    </subcellularLocation>
    <subcellularLocation>
        <location evidence="2">Golgi apparatus</location>
    </subcellularLocation>
    <subcellularLocation>
        <location evidence="2">Early endosome</location>
    </subcellularLocation>
</comment>
<comment type="subcellular location">
    <molecule>C99</molecule>
    <subcellularLocation>
        <location evidence="2">Early endosome</location>
    </subcellularLocation>
</comment>
<comment type="subcellular location">
    <molecule>Soluble APP-beta</molecule>
    <subcellularLocation>
        <location evidence="2">Secreted</location>
    </subcellularLocation>
</comment>
<comment type="subcellular location">
    <molecule>Amyloid-beta protein 42</molecule>
    <subcellularLocation>
        <location evidence="2">Cell surface</location>
    </subcellularLocation>
    <text evidence="2">Associates with FPR2 at the cell surface and the complex is then rapidly internalized.</text>
</comment>
<comment type="subcellular location">
    <molecule>Gamma-secretase C-terminal fragment 59</molecule>
    <subcellularLocation>
        <location evidence="2">Nucleus</location>
    </subcellularLocation>
    <subcellularLocation>
        <location evidence="2">Cytoplasm</location>
    </subcellularLocation>
    <text evidence="2 4">Located to both the cytoplasm and nuclei of neurons. It can be translocated to the nucleus through association with APBB1 (Fe65). In dopaminergic neurons, the phosphorylated Thr-724 form is localized to the nucleus (By similarity).</text>
</comment>
<comment type="alternative products">
    <event type="alternative splicing"/>
    <isoform>
        <id>Q95241-1</id>
        <name>APP770</name>
        <sequence type="displayed"/>
    </isoform>
    <isoform>
        <id>Q95241-2</id>
        <name>APP695</name>
        <sequence type="not described"/>
    </isoform>
    <text>Additional isoforms seem to exist.</text>
</comment>
<comment type="domain">
    <text evidence="2">The transmembrane helix undergoes a conformation change and unravels partially when bound to PSEN1, facilitating cleavage by PSEN1.</text>
</comment>
<comment type="domain">
    <text evidence="2">The basolateral sorting signal (BaSS) is required for sorting of membrane proteins to the basolateral surface of epithelial cells.</text>
</comment>
<comment type="domain">
    <text evidence="2">The GFLD subdomain binds Cu(2+) ions; this promotes homodimerization.</text>
</comment>
<comment type="domain">
    <text evidence="2">The NPXY sequence motif found in many tyrosine-phosphorylated proteins is required for the specific binding of the PID domain. However, additional amino acids either N- or C-terminal to the NPXY motif are often required for complete interaction. The PID domain-containing proteins which bind APP require the YENPTY motif for full interaction. These interactions are independent of phosphorylation on the terminal tyrosine residue. The YENPXY site is also involved in clathrin-mediated endocytosis.</text>
</comment>
<comment type="domain">
    <text evidence="2">The C-terminal region can bind zinc ions; this favors dimerization and formation of higher oligomers.</text>
</comment>
<comment type="domain">
    <text evidence="2">The OX-2 motif shows some similarity to a region in the N-terminus of CD200/MOX2.</text>
</comment>
<comment type="PTM">
    <text evidence="2">Proteolytically processed under normal cellular conditions. Cleavage either by alpha-secretase, beta-secretase or theta-secretase leads to generation and extracellular release of soluble APP peptides, S-APP-alpha and S-APP-beta, and the retention of corresponding membrane-anchored C-terminal fragments, C80, C83 and C99. Subsequent processing of C80 and C83 by gamma-secretase yields P3 peptides. This is the major secretory pathway and is non-amyloidogenic. Alternatively, presenilin/nicastrin-mediated gamma-secretase processing of C99 releases the amyloid-beta proteins, amyloid-beta protein 40 and amyloid-beta protein 42, major components of amyloid plaques, and the cytotoxic C-terminal fragments, gamma-CTF(50), gamma-CTF(57) and gamma-CTF(59). PSEN1 cleavage is more efficient with C83 than with C99 as substrate (in vitro). Amyloid-beta protein 40 and Amyloid-beta protein 42 are cleaved by ACE. Many other minor amyloid-beta peptides, amyloid-beta 1-X peptides, are found in cerebral spinal fluid (CSF) including the amyloid-beta X-15 peptides, produced from the cleavage by alpha-secretase.</text>
</comment>
<comment type="PTM">
    <text evidence="1">Proteolytically cleaved by caspases during neuronal apoptosis. Cleavage at Asp-720 by either caspase-3, -8 or -9 results in the production of the neurotoxic C31 peptide and the increased production of amyloid-beta peptides.</text>
</comment>
<comment type="PTM">
    <text evidence="1">N- and O-glycosylated.</text>
</comment>
<comment type="PTM">
    <text evidence="2">Phosphorylation in the C-terminal on tyrosine, threonine and serine residues is neuron-specific. Phosphorylation can affect APP processing, neuronal differentiation and interaction with other proteins. Phosphorylated on Thr-724 in neuronal cells by Cdc5 kinase and Mapk10, in dividing cells by Cdc2 kinase in a cell-cycle dependent manner with maximal levels at the G2/M phase and, in vitro, by GSK-3-beta. The Thr-724 phosphorylated form causes a conformational change which reduces binding of Fe65 family members. In dopaminergic (DA) neurons, phosphorylation on Thr-724 by LRKK2 promotes the production and the nuclear translocation of the APP intracellular domain (AICD) which induces DA neuron apoptosis. Phosphorylation on Tyr-738 is required for SHC binding. Phosphorylated in the extracellular domain by casein kinases on both soluble and membrane-bound APP. This phosphorylation is inhibited by heparin.</text>
</comment>
<comment type="PTM">
    <text evidence="1">Trophic-factor deprivation triggers the cleavage of surface APP by beta-secretase to release sAPP-beta which is further cleaved to release an N-terminal fragment of APP (N-APP).</text>
</comment>
<comment type="PTM">
    <text evidence="4">Amyloid-beta peptides are degraded by IDE.</text>
</comment>
<comment type="PTM">
    <text evidence="2">Sulfated on tyrosine residues.</text>
</comment>
<comment type="miscellaneous">
    <text evidence="2">Chelation of metal ions, notably copper, iron and zinc, can induce histidine-bridging between amyloid-beta molecules resulting in amyloid-beta-metal aggregates. Extracellular zinc-binding increases binding of heparin to APP and inhibits collagen-binding.</text>
</comment>
<comment type="similarity">
    <text evidence="7">Belongs to the APP family.</text>
</comment>
<sequence>MLPGLALLLLAAWTARALEVPTDGNAGLLAEPQIAMFCGRLNMHMNVQNGKWDSDPSGTKTCIDTKEGILQYCQEVYPELQITNVVEANQPVTIQNWCKRDRKQCKTHPHIVIPYRCLVGEFVSDALLVPDKCKFLHQERMDVCETHLHWHTVAKETCSEKSTNLHDYGMLLPCGIDKFRGVEFVCCPLAEESDHVDSADAEEDDSDVWWGGADTDYADGSEDKVVEVAEEEEVAEVEEEEADDDEDDEDGDEVEEEAEEPYEEATERTTSIATTTTTTTESVEEVVREVCSEQAETGPCRAMISRWYFDVTEGKCAPFFYGGCGGNRNNFDTEEYCMAVCGSVIPTTAASTPDAVDKYLETPGDENEHAHFQKAKERLEAKHRERMSQVMREWEEAERQAKNLPKADKKAVIQHFQEKVESLEQEAANERQQLVETHMARVEAMLNDRRRLALENYITALQAVPPRPRHVFNMLKKYVRAEQKDRQHTLKHFEHVRMVDPKKAAQIRSQVMTHLRVIYERMNQSLSLLYNVPAVAEEIQDEVDELLQKEQNYSDDVLANMISEPRISYGNDALMPSLTETKTTVELLPVNGEFSLDDLQPWHSFGADSVPANTENEVEPVDARPAADRGLTTRPGSGLTNIKTEEISEVKMDAEFRHDSGYEVHHQKLVFFAEDVGSNKGAIIGLMVGGVVIATVIVITLVMLKKKQYTSIHHGVVEVDAAVTPEERHLSKMQQNGYENPTYKFFEQMQN</sequence>
<evidence type="ECO:0000250" key="1"/>
<evidence type="ECO:0000250" key="2">
    <source>
        <dbReference type="UniProtKB" id="P05067"/>
    </source>
</evidence>
<evidence type="ECO:0000250" key="3">
    <source>
        <dbReference type="UniProtKB" id="P08592"/>
    </source>
</evidence>
<evidence type="ECO:0000250" key="4">
    <source>
        <dbReference type="UniProtKB" id="P12023"/>
    </source>
</evidence>
<evidence type="ECO:0000255" key="5"/>
<evidence type="ECO:0000255" key="6">
    <source>
        <dbReference type="PROSITE-ProRule" id="PRU00031"/>
    </source>
</evidence>
<evidence type="ECO:0000255" key="7">
    <source>
        <dbReference type="PROSITE-ProRule" id="PRU01217"/>
    </source>
</evidence>
<evidence type="ECO:0000255" key="8">
    <source>
        <dbReference type="PROSITE-ProRule" id="PRU01218"/>
    </source>
</evidence>
<evidence type="ECO:0000256" key="9">
    <source>
        <dbReference type="SAM" id="MobiDB-lite"/>
    </source>
</evidence>
<evidence type="ECO:0000305" key="10"/>
<dbReference type="EMBL" id="S81024">
    <property type="protein sequence ID" value="AAD14347.1"/>
    <property type="molecule type" value="mRNA"/>
</dbReference>
<dbReference type="SMR" id="Q95241"/>
<dbReference type="MINT" id="Q95241"/>
<dbReference type="MEROPS" id="I02.015"/>
<dbReference type="GlyCosmos" id="Q95241">
    <property type="glycosylation" value="2 sites, No reported glycans"/>
</dbReference>
<dbReference type="GO" id="GO:0030424">
    <property type="term" value="C:axon"/>
    <property type="evidence" value="ECO:0000250"/>
    <property type="project" value="UniProtKB"/>
</dbReference>
<dbReference type="GO" id="GO:0009986">
    <property type="term" value="C:cell surface"/>
    <property type="evidence" value="ECO:0007669"/>
    <property type="project" value="UniProtKB-SubCell"/>
</dbReference>
<dbReference type="GO" id="GO:0005905">
    <property type="term" value="C:clathrin-coated pit"/>
    <property type="evidence" value="ECO:0007669"/>
    <property type="project" value="UniProtKB-SubCell"/>
</dbReference>
<dbReference type="GO" id="GO:0005737">
    <property type="term" value="C:cytoplasm"/>
    <property type="evidence" value="ECO:0000250"/>
    <property type="project" value="UniProtKB"/>
</dbReference>
<dbReference type="GO" id="GO:0005769">
    <property type="term" value="C:early endosome"/>
    <property type="evidence" value="ECO:0000250"/>
    <property type="project" value="UniProtKB"/>
</dbReference>
<dbReference type="GO" id="GO:0005783">
    <property type="term" value="C:endoplasmic reticulum"/>
    <property type="evidence" value="ECO:0000250"/>
    <property type="project" value="UniProtKB"/>
</dbReference>
<dbReference type="GO" id="GO:0005576">
    <property type="term" value="C:extracellular region"/>
    <property type="evidence" value="ECO:0007669"/>
    <property type="project" value="UniProtKB-SubCell"/>
</dbReference>
<dbReference type="GO" id="GO:0005794">
    <property type="term" value="C:Golgi apparatus"/>
    <property type="evidence" value="ECO:0000250"/>
    <property type="project" value="UniProtKB"/>
</dbReference>
<dbReference type="GO" id="GO:0005798">
    <property type="term" value="C:Golgi-associated vesicle"/>
    <property type="evidence" value="ECO:0000250"/>
    <property type="project" value="UniProtKB"/>
</dbReference>
<dbReference type="GO" id="GO:0030426">
    <property type="term" value="C:growth cone"/>
    <property type="evidence" value="ECO:0007669"/>
    <property type="project" value="UniProtKB-SubCell"/>
</dbReference>
<dbReference type="GO" id="GO:0016020">
    <property type="term" value="C:membrane"/>
    <property type="evidence" value="ECO:0000250"/>
    <property type="project" value="UniProtKB"/>
</dbReference>
<dbReference type="GO" id="GO:0045121">
    <property type="term" value="C:membrane raft"/>
    <property type="evidence" value="ECO:0007669"/>
    <property type="project" value="TreeGrafter"/>
</dbReference>
<dbReference type="GO" id="GO:0005634">
    <property type="term" value="C:nucleus"/>
    <property type="evidence" value="ECO:0007669"/>
    <property type="project" value="UniProtKB-SubCell"/>
</dbReference>
<dbReference type="GO" id="GO:0043204">
    <property type="term" value="C:perikaryon"/>
    <property type="evidence" value="ECO:0007669"/>
    <property type="project" value="UniProtKB-SubCell"/>
</dbReference>
<dbReference type="GO" id="GO:0005886">
    <property type="term" value="C:plasma membrane"/>
    <property type="evidence" value="ECO:0007669"/>
    <property type="project" value="UniProtKB-SubCell"/>
</dbReference>
<dbReference type="GO" id="GO:0055037">
    <property type="term" value="C:recycling endosome"/>
    <property type="evidence" value="ECO:0000250"/>
    <property type="project" value="UniProtKB"/>
</dbReference>
<dbReference type="GO" id="GO:0003677">
    <property type="term" value="F:DNA binding"/>
    <property type="evidence" value="ECO:0000250"/>
    <property type="project" value="UniProtKB"/>
</dbReference>
<dbReference type="GO" id="GO:0008201">
    <property type="term" value="F:heparin binding"/>
    <property type="evidence" value="ECO:0007669"/>
    <property type="project" value="UniProtKB-KW"/>
</dbReference>
<dbReference type="GO" id="GO:0004867">
    <property type="term" value="F:serine-type endopeptidase inhibitor activity"/>
    <property type="evidence" value="ECO:0007669"/>
    <property type="project" value="UniProtKB-KW"/>
</dbReference>
<dbReference type="GO" id="GO:0030546">
    <property type="term" value="F:signaling receptor activator activity"/>
    <property type="evidence" value="ECO:0007669"/>
    <property type="project" value="TreeGrafter"/>
</dbReference>
<dbReference type="GO" id="GO:0005102">
    <property type="term" value="F:signaling receptor binding"/>
    <property type="evidence" value="ECO:0007669"/>
    <property type="project" value="TreeGrafter"/>
</dbReference>
<dbReference type="GO" id="GO:0046914">
    <property type="term" value="F:transition metal ion binding"/>
    <property type="evidence" value="ECO:0007669"/>
    <property type="project" value="InterPro"/>
</dbReference>
<dbReference type="GO" id="GO:0008344">
    <property type="term" value="P:adult locomotory behavior"/>
    <property type="evidence" value="ECO:0000250"/>
    <property type="project" value="UniProtKB"/>
</dbReference>
<dbReference type="GO" id="GO:0006915">
    <property type="term" value="P:apoptotic process"/>
    <property type="evidence" value="ECO:0007669"/>
    <property type="project" value="UniProtKB-KW"/>
</dbReference>
<dbReference type="GO" id="GO:0008088">
    <property type="term" value="P:axo-dendritic transport"/>
    <property type="evidence" value="ECO:0000250"/>
    <property type="project" value="UniProtKB"/>
</dbReference>
<dbReference type="GO" id="GO:0016199">
    <property type="term" value="P:axon midline choice point recognition"/>
    <property type="evidence" value="ECO:0000250"/>
    <property type="project" value="UniProtKB"/>
</dbReference>
<dbReference type="GO" id="GO:0007409">
    <property type="term" value="P:axonogenesis"/>
    <property type="evidence" value="ECO:0000250"/>
    <property type="project" value="UniProtKB"/>
</dbReference>
<dbReference type="GO" id="GO:0007155">
    <property type="term" value="P:cell adhesion"/>
    <property type="evidence" value="ECO:0007669"/>
    <property type="project" value="UniProtKB-KW"/>
</dbReference>
<dbReference type="GO" id="GO:0007417">
    <property type="term" value="P:central nervous system development"/>
    <property type="evidence" value="ECO:0007669"/>
    <property type="project" value="TreeGrafter"/>
</dbReference>
<dbReference type="GO" id="GO:0048669">
    <property type="term" value="P:collateral sprouting in absence of injury"/>
    <property type="evidence" value="ECO:0000250"/>
    <property type="project" value="UniProtKB"/>
</dbReference>
<dbReference type="GO" id="GO:0016358">
    <property type="term" value="P:dendrite development"/>
    <property type="evidence" value="ECO:0000250"/>
    <property type="project" value="UniProtKB"/>
</dbReference>
<dbReference type="GO" id="GO:0006897">
    <property type="term" value="P:endocytosis"/>
    <property type="evidence" value="ECO:0000250"/>
    <property type="project" value="UniProtKB"/>
</dbReference>
<dbReference type="GO" id="GO:0030198">
    <property type="term" value="P:extracellular matrix organization"/>
    <property type="evidence" value="ECO:0000250"/>
    <property type="project" value="UniProtKB"/>
</dbReference>
<dbReference type="GO" id="GO:0006878">
    <property type="term" value="P:intracellular copper ion homeostasis"/>
    <property type="evidence" value="ECO:0000250"/>
    <property type="project" value="UniProtKB"/>
</dbReference>
<dbReference type="GO" id="GO:0035235">
    <property type="term" value="P:ionotropic glutamate receptor signaling pathway"/>
    <property type="evidence" value="ECO:0000250"/>
    <property type="project" value="UniProtKB"/>
</dbReference>
<dbReference type="GO" id="GO:0007626">
    <property type="term" value="P:locomotory behavior"/>
    <property type="evidence" value="ECO:0000250"/>
    <property type="project" value="UniProtKB"/>
</dbReference>
<dbReference type="GO" id="GO:0007617">
    <property type="term" value="P:mating behavior"/>
    <property type="evidence" value="ECO:0000250"/>
    <property type="project" value="UniProtKB"/>
</dbReference>
<dbReference type="GO" id="GO:0031175">
    <property type="term" value="P:neuron projection development"/>
    <property type="evidence" value="ECO:0000250"/>
    <property type="project" value="UniProtKB"/>
</dbReference>
<dbReference type="GO" id="GO:0016322">
    <property type="term" value="P:neuron remodeling"/>
    <property type="evidence" value="ECO:0000250"/>
    <property type="project" value="UniProtKB"/>
</dbReference>
<dbReference type="GO" id="GO:0007219">
    <property type="term" value="P:Notch signaling pathway"/>
    <property type="evidence" value="ECO:0007669"/>
    <property type="project" value="UniProtKB-KW"/>
</dbReference>
<dbReference type="GO" id="GO:0045931">
    <property type="term" value="P:positive regulation of mitotic cell cycle"/>
    <property type="evidence" value="ECO:0000250"/>
    <property type="project" value="UniProtKB"/>
</dbReference>
<dbReference type="GO" id="GO:0040014">
    <property type="term" value="P:regulation of multicellular organism growth"/>
    <property type="evidence" value="ECO:0000250"/>
    <property type="project" value="UniProtKB"/>
</dbReference>
<dbReference type="GO" id="GO:0050803">
    <property type="term" value="P:regulation of synapse structure or activity"/>
    <property type="evidence" value="ECO:0000250"/>
    <property type="project" value="UniProtKB"/>
</dbReference>
<dbReference type="GO" id="GO:0006417">
    <property type="term" value="P:regulation of translation"/>
    <property type="evidence" value="ECO:0000250"/>
    <property type="project" value="UniProtKB"/>
</dbReference>
<dbReference type="GO" id="GO:0008542">
    <property type="term" value="P:visual learning"/>
    <property type="evidence" value="ECO:0000250"/>
    <property type="project" value="UniProtKB"/>
</dbReference>
<dbReference type="CDD" id="cd22607">
    <property type="entry name" value="Kunitz_ABPP-like"/>
    <property type="match status" value="1"/>
</dbReference>
<dbReference type="FunFam" id="3.30.1490.140:FF:000001">
    <property type="entry name" value="Amyloid beta (A4) protein b"/>
    <property type="match status" value="1"/>
</dbReference>
<dbReference type="FunFam" id="3.90.570.10:FF:000001">
    <property type="entry name" value="Amyloid beta A4 protein"/>
    <property type="match status" value="1"/>
</dbReference>
<dbReference type="FunFam" id="4.10.230.10:FF:000001">
    <property type="entry name" value="Amyloid beta A4 protein"/>
    <property type="match status" value="1"/>
</dbReference>
<dbReference type="FunFam" id="4.10.410.10:FF:000001">
    <property type="entry name" value="Amyloid beta A4 protein"/>
    <property type="match status" value="1"/>
</dbReference>
<dbReference type="FunFam" id="1.20.120.770:FF:000001">
    <property type="entry name" value="Amyloid beta A4 protein-like isoform 1"/>
    <property type="match status" value="1"/>
</dbReference>
<dbReference type="Gene3D" id="1.20.120.770">
    <property type="entry name" value="Amyloid precursor protein, E2 domain"/>
    <property type="match status" value="1"/>
</dbReference>
<dbReference type="Gene3D" id="4.10.230.10">
    <property type="entry name" value="Amyloidogenic glycoprotein, amyloid-beta peptide"/>
    <property type="match status" value="1"/>
</dbReference>
<dbReference type="Gene3D" id="3.30.1490.140">
    <property type="entry name" value="Amyloidogenic glycoprotein, copper-binding domain"/>
    <property type="match status" value="1"/>
</dbReference>
<dbReference type="Gene3D" id="3.90.570.10">
    <property type="entry name" value="Amyloidogenic glycoprotein, heparin-binding domain"/>
    <property type="match status" value="1"/>
</dbReference>
<dbReference type="Gene3D" id="4.10.410.10">
    <property type="entry name" value="Pancreatic trypsin inhibitor Kunitz domain"/>
    <property type="match status" value="1"/>
</dbReference>
<dbReference type="Gene3D" id="2.30.29.30">
    <property type="entry name" value="Pleckstrin-homology domain (PH domain)/Phosphotyrosine-binding domain (PTB)"/>
    <property type="match status" value="1"/>
</dbReference>
<dbReference type="InterPro" id="IPR036669">
    <property type="entry name" value="Amyloid_Cu-bd_sf"/>
</dbReference>
<dbReference type="InterPro" id="IPR008155">
    <property type="entry name" value="Amyloid_glyco"/>
</dbReference>
<dbReference type="InterPro" id="IPR013803">
    <property type="entry name" value="Amyloid_glyco_Abeta"/>
</dbReference>
<dbReference type="InterPro" id="IPR037071">
    <property type="entry name" value="Amyloid_glyco_Abeta_sf"/>
</dbReference>
<dbReference type="InterPro" id="IPR011178">
    <property type="entry name" value="Amyloid_glyco_Cu-bd"/>
</dbReference>
<dbReference type="InterPro" id="IPR024329">
    <property type="entry name" value="Amyloid_glyco_E2_domain"/>
</dbReference>
<dbReference type="InterPro" id="IPR008154">
    <property type="entry name" value="Amyloid_glyco_extra"/>
</dbReference>
<dbReference type="InterPro" id="IPR015849">
    <property type="entry name" value="Amyloid_glyco_heparin-bd"/>
</dbReference>
<dbReference type="InterPro" id="IPR036454">
    <property type="entry name" value="Amyloid_glyco_heparin-bd_sf"/>
</dbReference>
<dbReference type="InterPro" id="IPR019745">
    <property type="entry name" value="Amyloid_glyco_intracell_CS"/>
</dbReference>
<dbReference type="InterPro" id="IPR019543">
    <property type="entry name" value="APP_amyloid_C"/>
</dbReference>
<dbReference type="InterPro" id="IPR019744">
    <property type="entry name" value="APP_CUBD_CS"/>
</dbReference>
<dbReference type="InterPro" id="IPR036176">
    <property type="entry name" value="E2_sf"/>
</dbReference>
<dbReference type="InterPro" id="IPR002223">
    <property type="entry name" value="Kunitz_BPTI"/>
</dbReference>
<dbReference type="InterPro" id="IPR036880">
    <property type="entry name" value="Kunitz_BPTI_sf"/>
</dbReference>
<dbReference type="InterPro" id="IPR011993">
    <property type="entry name" value="PH-like_dom_sf"/>
</dbReference>
<dbReference type="InterPro" id="IPR020901">
    <property type="entry name" value="Prtase_inh_Kunz-CS"/>
</dbReference>
<dbReference type="PANTHER" id="PTHR23103">
    <property type="entry name" value="ALZHEIMER'S DISEASE BETA-AMYLOID RELATED"/>
    <property type="match status" value="1"/>
</dbReference>
<dbReference type="PANTHER" id="PTHR23103:SF7">
    <property type="entry name" value="AMYLOID-BETA PRECURSOR PROTEIN"/>
    <property type="match status" value="1"/>
</dbReference>
<dbReference type="Pfam" id="PF10515">
    <property type="entry name" value="APP_amyloid"/>
    <property type="match status" value="1"/>
</dbReference>
<dbReference type="Pfam" id="PF12924">
    <property type="entry name" value="APP_Cu_bd"/>
    <property type="match status" value="1"/>
</dbReference>
<dbReference type="Pfam" id="PF12925">
    <property type="entry name" value="APP_E2"/>
    <property type="match status" value="1"/>
</dbReference>
<dbReference type="Pfam" id="PF02177">
    <property type="entry name" value="APP_N"/>
    <property type="match status" value="1"/>
</dbReference>
<dbReference type="Pfam" id="PF03494">
    <property type="entry name" value="Beta-APP"/>
    <property type="match status" value="1"/>
</dbReference>
<dbReference type="Pfam" id="PF00014">
    <property type="entry name" value="Kunitz_BPTI"/>
    <property type="match status" value="1"/>
</dbReference>
<dbReference type="PRINTS" id="PR00203">
    <property type="entry name" value="AMYLOIDA4"/>
</dbReference>
<dbReference type="PRINTS" id="PR00759">
    <property type="entry name" value="BASICPTASE"/>
</dbReference>
<dbReference type="PRINTS" id="PR00204">
    <property type="entry name" value="BETAAMYLOID"/>
</dbReference>
<dbReference type="SMART" id="SM00006">
    <property type="entry name" value="A4_EXTRA"/>
    <property type="match status" value="1"/>
</dbReference>
<dbReference type="SMART" id="SM00131">
    <property type="entry name" value="KU"/>
    <property type="match status" value="1"/>
</dbReference>
<dbReference type="SUPFAM" id="SSF56491">
    <property type="entry name" value="A heparin-binding domain"/>
    <property type="match status" value="1"/>
</dbReference>
<dbReference type="SUPFAM" id="SSF89811">
    <property type="entry name" value="Amyloid beta a4 protein copper binding domain (domain 2)"/>
    <property type="match status" value="1"/>
</dbReference>
<dbReference type="SUPFAM" id="SSF57362">
    <property type="entry name" value="BPTI-like"/>
    <property type="match status" value="1"/>
</dbReference>
<dbReference type="SUPFAM" id="SSF109843">
    <property type="entry name" value="CAPPD, an extracellular domain of amyloid beta A4 protein"/>
    <property type="match status" value="1"/>
</dbReference>
<dbReference type="PROSITE" id="PS00319">
    <property type="entry name" value="APP_CUBD"/>
    <property type="match status" value="1"/>
</dbReference>
<dbReference type="PROSITE" id="PS51869">
    <property type="entry name" value="APP_E1"/>
    <property type="match status" value="1"/>
</dbReference>
<dbReference type="PROSITE" id="PS51870">
    <property type="entry name" value="APP_E2"/>
    <property type="match status" value="1"/>
</dbReference>
<dbReference type="PROSITE" id="PS00320">
    <property type="entry name" value="APP_INTRA"/>
    <property type="match status" value="1"/>
</dbReference>
<dbReference type="PROSITE" id="PS00280">
    <property type="entry name" value="BPTI_KUNITZ_1"/>
    <property type="match status" value="1"/>
</dbReference>
<dbReference type="PROSITE" id="PS50279">
    <property type="entry name" value="BPTI_KUNITZ_2"/>
    <property type="match status" value="1"/>
</dbReference>
<accession>Q95241</accession>
<feature type="signal peptide" evidence="2">
    <location>
        <begin position="1"/>
        <end position="17"/>
    </location>
</feature>
<feature type="chain" id="PRO_0000000172" description="Amyloid-beta precursor protein">
    <location>
        <begin position="18"/>
        <end position="751"/>
    </location>
</feature>
<feature type="chain" id="PRO_0000000173" description="Soluble APP-alpha" evidence="5">
    <location>
        <begin position="18"/>
        <end position="668"/>
    </location>
</feature>
<feature type="chain" id="PRO_0000000174" description="Soluble APP-beta" evidence="5">
    <location>
        <begin position="18"/>
        <end position="652"/>
    </location>
</feature>
<feature type="chain" id="PRO_0000381972" description="N-APP" evidence="1">
    <location>
        <begin position="18"/>
        <end position="286"/>
    </location>
</feature>
<feature type="chain" id="PRO_0000000175" description="C99" evidence="5">
    <location>
        <begin position="653"/>
        <end position="751"/>
    </location>
</feature>
<feature type="chain" id="PRO_0000000176" description="Amyloid-beta protein 42" evidence="2">
    <location>
        <begin position="653"/>
        <end position="694"/>
    </location>
</feature>
<feature type="chain" id="PRO_0000000177" description="Amyloid-beta protein 40" evidence="2">
    <location>
        <begin position="653"/>
        <end position="692"/>
    </location>
</feature>
<feature type="chain" id="PRO_0000000178" description="C83" evidence="5">
    <location>
        <begin position="669"/>
        <end position="751"/>
    </location>
</feature>
<feature type="peptide" id="PRO_0000000179" description="P3(42)" evidence="5">
    <location>
        <begin position="669"/>
        <end position="694"/>
    </location>
</feature>
<feature type="peptide" id="PRO_0000000180" description="P3(40)" evidence="5">
    <location>
        <begin position="669"/>
        <end position="692"/>
    </location>
</feature>
<feature type="chain" id="PRO_0000384580" description="C80">
    <location>
        <begin position="672"/>
        <end position="751"/>
    </location>
</feature>
<feature type="chain" id="PRO_0000000181" description="Gamma-secretase C-terminal fragment 59" evidence="5">
    <location>
        <begin position="693"/>
        <end position="751"/>
    </location>
</feature>
<feature type="chain" id="PRO_0000000182" description="Gamma-secretase C-terminal fragment 57" evidence="5">
    <location>
        <begin position="695"/>
        <end position="751"/>
    </location>
</feature>
<feature type="chain" id="PRO_0000000183" description="Gamma-secretase C-terminal fragment 50" evidence="5">
    <location>
        <begin position="702"/>
        <end position="751"/>
    </location>
</feature>
<feature type="chain" id="PRO_0000000184" description="C31" evidence="5">
    <location>
        <begin position="721"/>
        <end position="751"/>
    </location>
</feature>
<feature type="topological domain" description="Extracellular" evidence="10">
    <location>
        <begin position="18"/>
        <end position="682"/>
    </location>
</feature>
<feature type="transmembrane region" description="Helical" evidence="2">
    <location>
        <begin position="683"/>
        <end position="703"/>
    </location>
</feature>
<feature type="topological domain" description="Cytoplasmic" evidence="10">
    <location>
        <begin position="704"/>
        <end position="751"/>
    </location>
</feature>
<feature type="domain" description="E1" evidence="7">
    <location>
        <begin position="28"/>
        <end position="189"/>
    </location>
</feature>
<feature type="domain" description="BPTI/Kunitz inhibitor" evidence="6">
    <location>
        <begin position="291"/>
        <end position="341"/>
    </location>
</feature>
<feature type="domain" description="E2" evidence="8">
    <location>
        <begin position="355"/>
        <end position="546"/>
    </location>
</feature>
<feature type="region of interest" description="GFLD subdomain" evidence="7">
    <location>
        <begin position="28"/>
        <end position="123"/>
    </location>
</feature>
<feature type="region of interest" description="CuBD subdomain" evidence="7">
    <location>
        <begin position="131"/>
        <end position="189"/>
    </location>
</feature>
<feature type="region of interest" description="Zinc-binding" evidence="1">
    <location>
        <begin position="181"/>
        <end position="188"/>
    </location>
</feature>
<feature type="region of interest" description="Disordered" evidence="9">
    <location>
        <begin position="195"/>
        <end position="284"/>
    </location>
</feature>
<feature type="region of interest" description="Heparin-binding" evidence="1">
    <location>
        <begin position="316"/>
        <end position="344"/>
    </location>
</feature>
<feature type="region of interest" description="Heparin-binding" evidence="1">
    <location>
        <begin position="363"/>
        <end position="428"/>
    </location>
</feature>
<feature type="region of interest" description="Collagen-binding" evidence="2">
    <location>
        <begin position="504"/>
        <end position="521"/>
    </location>
</feature>
<feature type="region of interest" description="Interaction with PSEN1" evidence="2">
    <location>
        <begin position="676"/>
        <end position="703"/>
    </location>
</feature>
<feature type="region of interest" description="Interaction with G(o)-alpha" evidence="1">
    <location>
        <begin position="713"/>
        <end position="732"/>
    </location>
</feature>
<feature type="region of interest" description="Required for the interaction with KIF5B and for anterograde transport in axons" evidence="2">
    <location>
        <begin position="737"/>
        <end position="751"/>
    </location>
</feature>
<feature type="short sequence motif" description="OX-2" evidence="2">
    <location>
        <begin position="344"/>
        <end position="346"/>
    </location>
</feature>
<feature type="short sequence motif" description="Basolateral sorting signal" evidence="1">
    <location>
        <begin position="705"/>
        <end position="715"/>
    </location>
</feature>
<feature type="short sequence motif" description="YENPXY motif; contains endocytosis signal" evidence="2">
    <location>
        <begin position="738"/>
        <end position="743"/>
    </location>
</feature>
<feature type="compositionally biased region" description="Acidic residues" evidence="9">
    <location>
        <begin position="228"/>
        <end position="264"/>
    </location>
</feature>
<feature type="compositionally biased region" description="Low complexity" evidence="9">
    <location>
        <begin position="268"/>
        <end position="281"/>
    </location>
</feature>
<feature type="binding site" evidence="2">
    <location>
        <begin position="96"/>
        <end position="110"/>
    </location>
    <ligand>
        <name>heparin</name>
        <dbReference type="ChEBI" id="CHEBI:28304"/>
    </ligand>
</feature>
<feature type="binding site" evidence="7">
    <location>
        <position position="147"/>
    </location>
    <ligand>
        <name>Cu(2+)</name>
        <dbReference type="ChEBI" id="CHEBI:29036"/>
        <label>1</label>
    </ligand>
</feature>
<feature type="binding site" evidence="7">
    <location>
        <position position="151"/>
    </location>
    <ligand>
        <name>Cu(2+)</name>
        <dbReference type="ChEBI" id="CHEBI:29036"/>
        <label>1</label>
    </ligand>
</feature>
<feature type="binding site" evidence="7">
    <location>
        <position position="168"/>
    </location>
    <ligand>
        <name>Cu(2+)</name>
        <dbReference type="ChEBI" id="CHEBI:29036"/>
        <label>1</label>
    </ligand>
</feature>
<feature type="binding site" evidence="2">
    <location>
        <position position="183"/>
    </location>
    <ligand>
        <name>Zn(2+)</name>
        <dbReference type="ChEBI" id="CHEBI:29105"/>
        <label>1</label>
    </ligand>
</feature>
<feature type="binding site" evidence="2">
    <location>
        <position position="186"/>
    </location>
    <ligand>
        <name>Zn(2+)</name>
        <dbReference type="ChEBI" id="CHEBI:29105"/>
        <label>1</label>
    </ligand>
</feature>
<feature type="binding site" evidence="2">
    <location>
        <position position="187"/>
    </location>
    <ligand>
        <name>Zn(2+)</name>
        <dbReference type="ChEBI" id="CHEBI:29105"/>
        <label>1</label>
    </ligand>
</feature>
<feature type="binding site" evidence="2">
    <location>
        <position position="658"/>
    </location>
    <ligand>
        <name>Cu(2+)</name>
        <dbReference type="ChEBI" id="CHEBI:29036"/>
        <label>2</label>
    </ligand>
</feature>
<feature type="binding site" evidence="2">
    <location>
        <position position="658"/>
    </location>
    <ligand>
        <name>Zn(2+)</name>
        <dbReference type="ChEBI" id="CHEBI:29105"/>
        <label>2</label>
    </ligand>
</feature>
<feature type="binding site" evidence="2">
    <location>
        <position position="662"/>
    </location>
    <ligand>
        <name>Cu(2+)</name>
        <dbReference type="ChEBI" id="CHEBI:29036"/>
        <label>2</label>
    </ligand>
</feature>
<feature type="binding site" evidence="2">
    <location>
        <position position="662"/>
    </location>
    <ligand>
        <name>Zn(2+)</name>
        <dbReference type="ChEBI" id="CHEBI:29105"/>
        <label>2</label>
    </ligand>
</feature>
<feature type="binding site" evidence="2">
    <location>
        <position position="665"/>
    </location>
    <ligand>
        <name>Cu(2+)</name>
        <dbReference type="ChEBI" id="CHEBI:29036"/>
        <label>2</label>
    </ligand>
</feature>
<feature type="binding site" evidence="2">
    <location>
        <position position="665"/>
    </location>
    <ligand>
        <name>Zn(2+)</name>
        <dbReference type="ChEBI" id="CHEBI:29105"/>
        <label>2</label>
    </ligand>
</feature>
<feature type="binding site" evidence="2">
    <location>
        <position position="666"/>
    </location>
    <ligand>
        <name>Cu(2+)</name>
        <dbReference type="ChEBI" id="CHEBI:29036"/>
        <label>2</label>
    </ligand>
</feature>
<feature type="binding site" evidence="2">
    <location>
        <position position="666"/>
    </location>
    <ligand>
        <name>Zn(2+)</name>
        <dbReference type="ChEBI" id="CHEBI:29105"/>
        <label>2</label>
    </ligand>
</feature>
<feature type="site" description="Required for Cu(2+) reduction" evidence="7">
    <location>
        <position position="170"/>
    </location>
</feature>
<feature type="site" description="Cleavage; by caspases" evidence="2">
    <location>
        <begin position="197"/>
        <end position="198"/>
    </location>
</feature>
<feature type="site" description="Cleavage; by caspases" evidence="2">
    <location>
        <begin position="219"/>
        <end position="220"/>
    </location>
</feature>
<feature type="site" description="Reactive bond">
    <location>
        <begin position="301"/>
        <end position="302"/>
    </location>
</feature>
<feature type="site" description="Cleavage; by beta-secretase" evidence="2">
    <location>
        <begin position="652"/>
        <end position="653"/>
    </location>
</feature>
<feature type="site" description="Cleavage; by ACE" evidence="2">
    <location>
        <begin position="659"/>
        <end position="660"/>
    </location>
</feature>
<feature type="site" description="Cleavage; by alpha-secretase" evidence="3">
    <location>
        <begin position="668"/>
        <end position="669"/>
    </location>
</feature>
<feature type="site" description="Cleavage; by theta-secretase" evidence="3">
    <location>
        <begin position="671"/>
        <end position="672"/>
    </location>
</feature>
<feature type="site" description="Implicated in free radical propagation" evidence="1">
    <location>
        <position position="685"/>
    </location>
</feature>
<feature type="site" description="Susceptible to oxidation" evidence="2">
    <location>
        <position position="687"/>
    </location>
</feature>
<feature type="site" description="Cleavage; by gamma-secretase; site 1" evidence="3">
    <location>
        <begin position="692"/>
        <end position="693"/>
    </location>
</feature>
<feature type="site" description="Cleavage; by gamma-secretase; site 2" evidence="2">
    <location>
        <begin position="694"/>
        <end position="695"/>
    </location>
</feature>
<feature type="site" description="Cleavage; by gamma-secretase; site 3" evidence="2">
    <location>
        <begin position="701"/>
        <end position="702"/>
    </location>
</feature>
<feature type="site" description="Cleavage; by a caspase" evidence="2">
    <location>
        <begin position="720"/>
        <end position="721"/>
    </location>
</feature>
<feature type="modified residue" description="Phosphoserine; by CK1 and CK2" evidence="2">
    <location>
        <position position="198"/>
    </location>
</feature>
<feature type="modified residue" description="Phosphoserine; by CK1 and CK2" evidence="2">
    <location>
        <position position="206"/>
    </location>
</feature>
<feature type="modified residue" description="Sulfotyrosine" evidence="5">
    <location>
        <position position="217"/>
    </location>
</feature>
<feature type="modified residue" description="Sulfotyrosine" evidence="5">
    <location>
        <position position="262"/>
    </location>
</feature>
<feature type="modified residue" description="Sulfotyrosine" evidence="5">
    <location>
        <position position="336"/>
    </location>
</feature>
<feature type="modified residue" description="Phosphoserine" evidence="2">
    <location>
        <position position="422"/>
    </location>
</feature>
<feature type="modified residue" description="Phosphotyrosine" evidence="2">
    <location>
        <position position="478"/>
    </location>
</feature>
<feature type="modified residue" description="Phosphothreonine" evidence="3">
    <location>
        <position position="710"/>
    </location>
</feature>
<feature type="modified residue" description="Phosphoserine; by APP-kinase I" evidence="3">
    <location>
        <position position="711"/>
    </location>
</feature>
<feature type="modified residue" description="Phosphothreonine; by CDK5 and MAPK10" evidence="2">
    <location>
        <position position="724"/>
    </location>
</feature>
<feature type="modified residue" description="Phosphotyrosine; by ABL1" evidence="4">
    <location>
        <position position="738"/>
    </location>
</feature>
<feature type="glycosylation site" description="N-linked (GlcNAc...) asparagine" evidence="10">
    <location>
        <position position="523"/>
    </location>
</feature>
<feature type="glycosylation site" description="N-linked (GlcNAc...) asparagine" evidence="10">
    <location>
        <position position="552"/>
    </location>
</feature>
<feature type="disulfide bond" evidence="7">
    <location>
        <begin position="38"/>
        <end position="62"/>
    </location>
</feature>
<feature type="disulfide bond" evidence="7">
    <location>
        <begin position="73"/>
        <end position="117"/>
    </location>
</feature>
<feature type="disulfide bond" evidence="7">
    <location>
        <begin position="98"/>
        <end position="105"/>
    </location>
</feature>
<feature type="disulfide bond" evidence="7">
    <location>
        <begin position="133"/>
        <end position="187"/>
    </location>
</feature>
<feature type="disulfide bond" evidence="7">
    <location>
        <begin position="144"/>
        <end position="174"/>
    </location>
</feature>
<feature type="disulfide bond" evidence="7">
    <location>
        <begin position="158"/>
        <end position="186"/>
    </location>
</feature>
<feature type="disulfide bond" evidence="6">
    <location>
        <begin position="291"/>
        <end position="341"/>
    </location>
</feature>
<feature type="disulfide bond" evidence="6">
    <location>
        <begin position="300"/>
        <end position="324"/>
    </location>
</feature>
<feature type="disulfide bond" evidence="6">
    <location>
        <begin position="316"/>
        <end position="337"/>
    </location>
</feature>
<feature type="cross-link" description="Glycyl lysine isopeptide (Lys-Gly) (interchain with G-Cter in ubiquitin)" evidence="3">
    <location>
        <position position="744"/>
    </location>
</feature>
<reference key="1">
    <citation type="journal article" date="1995" name="Neurobiol. Aging">
        <title>Beta-amyloid precursor protein gene in squirrel monkeys with cerebral amyloid angiopathy.</title>
        <authorList>
            <person name="Levy E."/>
            <person name="Amorim A."/>
            <person name="Frangione B."/>
            <person name="Walker L.C."/>
        </authorList>
    </citation>
    <scope>NUCLEOTIDE SEQUENCE [MRNA]</scope>
    <source>
        <tissue>Kidney</tissue>
        <tissue>Liver</tissue>
    </source>
</reference>